<accession>Q6UW68</accession>
<comment type="function">
    <text evidence="2">In cancer cells, plays a role in resistance to the chemotherapeutic agent cisplatin.</text>
</comment>
<comment type="interaction">
    <interactant intactId="EBI-6269551">
        <id>Q6UW68</id>
    </interactant>
    <interactant intactId="EBI-2808844">
        <id>Q8N6S5</id>
        <label>ARL6IP6</label>
    </interactant>
    <organismsDiffer>false</organismsDiffer>
    <experiments>3</experiments>
</comment>
<comment type="interaction">
    <interactant intactId="EBI-6269551">
        <id>Q6UW68</id>
    </interactant>
    <interactant intactId="EBI-749464">
        <id>Q12983</id>
        <label>BNIP3</label>
    </interactant>
    <organismsDiffer>false</organismsDiffer>
    <experiments>3</experiments>
</comment>
<comment type="interaction">
    <interactant intactId="EBI-6269551">
        <id>Q6UW68</id>
    </interactant>
    <interactant intactId="EBI-372265">
        <id>P21964</id>
        <label>COMT</label>
    </interactant>
    <organismsDiffer>false</organismsDiffer>
    <experiments>4</experiments>
</comment>
<comment type="interaction">
    <interactant intactId="EBI-6269551">
        <id>Q6UW68</id>
    </interactant>
    <interactant intactId="EBI-4401517">
        <id>O14653</id>
        <label>GOSR2</label>
    </interactant>
    <organismsDiffer>false</organismsDiffer>
    <experiments>3</experiments>
</comment>
<comment type="interaction">
    <interactant intactId="EBI-6269551">
        <id>Q6UW68</id>
    </interactant>
    <interactant intactId="EBI-466029">
        <id>P42858</id>
        <label>HTT</label>
    </interactant>
    <organismsDiffer>false</organismsDiffer>
    <experiments>3</experiments>
</comment>
<comment type="interaction">
    <interactant intactId="EBI-6269551">
        <id>Q6UW68</id>
    </interactant>
    <interactant intactId="EBI-1246131">
        <id>O95167</id>
        <label>NDUFA3</label>
    </interactant>
    <organismsDiffer>false</organismsDiffer>
    <experiments>3</experiments>
</comment>
<comment type="interaction">
    <interactant intactId="EBI-6269551">
        <id>Q6UW68</id>
    </interactant>
    <interactant intactId="EBI-692836">
        <id>P26678</id>
        <label>PLN</label>
    </interactant>
    <organismsDiffer>false</organismsDiffer>
    <experiments>3</experiments>
</comment>
<comment type="interaction">
    <interactant intactId="EBI-6269551">
        <id>Q6UW68</id>
    </interactant>
    <interactant intactId="EBI-10226799">
        <id>Q0VAQ4</id>
        <label>SMAGP</label>
    </interactant>
    <organismsDiffer>false</organismsDiffer>
    <experiments>3</experiments>
</comment>
<comment type="interaction">
    <interactant intactId="EBI-6269551">
        <id>Q6UW68</id>
    </interactant>
    <interactant intactId="EBI-2695795">
        <id>O43752</id>
        <label>STX6</label>
    </interactant>
    <organismsDiffer>false</organismsDiffer>
    <experiments>3</experiments>
</comment>
<comment type="interaction">
    <interactant intactId="EBI-6269551">
        <id>Q6UW68</id>
    </interactant>
    <interactant intactId="EBI-3221827">
        <id>O15400</id>
        <label>STX7</label>
    </interactant>
    <organismsDiffer>false</organismsDiffer>
    <experiments>3</experiments>
</comment>
<comment type="interaction">
    <interactant intactId="EBI-6269551">
        <id>Q6UW68</id>
    </interactant>
    <interactant intactId="EBI-727240">
        <id>Q9UNK0</id>
        <label>STX8</label>
    </interactant>
    <organismsDiffer>false</organismsDiffer>
    <experiments>3</experiments>
</comment>
<comment type="interaction">
    <interactant intactId="EBI-6269551">
        <id>Q6UW68</id>
    </interactant>
    <interactant intactId="EBI-723946">
        <id>P17152</id>
        <label>TMEM11</label>
    </interactant>
    <organismsDiffer>false</organismsDiffer>
    <experiments>3</experiments>
</comment>
<comment type="interaction">
    <interactant intactId="EBI-6269551">
        <id>Q6UW68</id>
    </interactant>
    <interactant intactId="EBI-2844246">
        <id>Q9NV12</id>
        <label>TMEM140</label>
    </interactant>
    <organismsDiffer>false</organismsDiffer>
    <experiments>3</experiments>
</comment>
<comment type="interaction">
    <interactant intactId="EBI-6269551">
        <id>Q6UW68</id>
    </interactant>
    <interactant intactId="EBI-16746122">
        <id>Q9NSU2-1</id>
        <label>TREX1</label>
    </interactant>
    <organismsDiffer>false</organismsDiffer>
    <experiments>3</experiments>
</comment>
<comment type="interaction">
    <interactant intactId="EBI-6269551">
        <id>Q6UW68</id>
    </interactant>
    <interactant intactId="EBI-744953">
        <id>O75379</id>
        <label>VAMP4</label>
    </interactant>
    <organismsDiffer>false</organismsDiffer>
    <experiments>3</experiments>
</comment>
<comment type="interaction">
    <interactant intactId="EBI-6269551">
        <id>Q6UW68</id>
    </interactant>
    <interactant intactId="EBI-1207615">
        <id>Q86Y07</id>
        <label>VRK2</label>
    </interactant>
    <organismsDiffer>false</organismsDiffer>
    <experiments>3</experiments>
</comment>
<comment type="subcellular location">
    <subcellularLocation>
        <location evidence="2">Membrane</location>
        <topology evidence="2">Multi-pass membrane protein</topology>
    </subcellularLocation>
    <text>Located on cell surface microvilli. In cancer cells, transition in subcellular location from cell surface to intracellular regions correlates the progression of cisplatin resistance.</text>
</comment>
<comment type="tissue specificity">
    <text evidence="2">Widely expressed with highest levels in pancreas, followed by adrenal gland, thyroid, liver, mammary gland, prostate, kidney, and retina; lowest levels in skeletal muscle. Overexpressed in cisplatin-resistant cancer cells (at protein level).</text>
</comment>
<comment type="similarity">
    <text evidence="3">Belongs to the TMEM205 family.</text>
</comment>
<evidence type="ECO:0000255" key="1"/>
<evidence type="ECO:0000269" key="2">
    <source>
    </source>
</evidence>
<evidence type="ECO:0000305" key="3"/>
<keyword id="KW-0472">Membrane</keyword>
<keyword id="KW-1267">Proteomics identification</keyword>
<keyword id="KW-1185">Reference proteome</keyword>
<keyword id="KW-0812">Transmembrane</keyword>
<keyword id="KW-1133">Transmembrane helix</keyword>
<protein>
    <recommendedName>
        <fullName>Transmembrane protein 205</fullName>
    </recommendedName>
</protein>
<organism>
    <name type="scientific">Homo sapiens</name>
    <name type="common">Human</name>
    <dbReference type="NCBI Taxonomy" id="9606"/>
    <lineage>
        <taxon>Eukaryota</taxon>
        <taxon>Metazoa</taxon>
        <taxon>Chordata</taxon>
        <taxon>Craniata</taxon>
        <taxon>Vertebrata</taxon>
        <taxon>Euteleostomi</taxon>
        <taxon>Mammalia</taxon>
        <taxon>Eutheria</taxon>
        <taxon>Euarchontoglires</taxon>
        <taxon>Primates</taxon>
        <taxon>Haplorrhini</taxon>
        <taxon>Catarrhini</taxon>
        <taxon>Hominidae</taxon>
        <taxon>Homo</taxon>
    </lineage>
</organism>
<proteinExistence type="evidence at protein level"/>
<name>TM205_HUMAN</name>
<sequence length="189" mass="21198">MEEGGNLGGLIKMVHLLVLSGAWGMQMWVTFVSGFLLFRSLPRHTFGLVQSKLFPFYFHISMGCAFINLCILASQHAWAQLTFWEASQLYLLFLSLTLATVNARWLEPRTTAAMWALQTVEKERGLGGEVPGSHQGPDPYRQLREKDPKYSALRQNFFRYHGLSSLCNLGCVLSNGLCLAGLALEIRSL</sequence>
<reference key="1">
    <citation type="journal article" date="2003" name="Genome Res.">
        <title>The secreted protein discovery initiative (SPDI), a large-scale effort to identify novel human secreted and transmembrane proteins: a bioinformatics assessment.</title>
        <authorList>
            <person name="Clark H.F."/>
            <person name="Gurney A.L."/>
            <person name="Abaya E."/>
            <person name="Baker K."/>
            <person name="Baldwin D.T."/>
            <person name="Brush J."/>
            <person name="Chen J."/>
            <person name="Chow B."/>
            <person name="Chui C."/>
            <person name="Crowley C."/>
            <person name="Currell B."/>
            <person name="Deuel B."/>
            <person name="Dowd P."/>
            <person name="Eaton D."/>
            <person name="Foster J.S."/>
            <person name="Grimaldi C."/>
            <person name="Gu Q."/>
            <person name="Hass P.E."/>
            <person name="Heldens S."/>
            <person name="Huang A."/>
            <person name="Kim H.S."/>
            <person name="Klimowski L."/>
            <person name="Jin Y."/>
            <person name="Johnson S."/>
            <person name="Lee J."/>
            <person name="Lewis L."/>
            <person name="Liao D."/>
            <person name="Mark M.R."/>
            <person name="Robbie E."/>
            <person name="Sanchez C."/>
            <person name="Schoenfeld J."/>
            <person name="Seshagiri S."/>
            <person name="Simmons L."/>
            <person name="Singh J."/>
            <person name="Smith V."/>
            <person name="Stinson J."/>
            <person name="Vagts A."/>
            <person name="Vandlen R.L."/>
            <person name="Watanabe C."/>
            <person name="Wieand D."/>
            <person name="Woods K."/>
            <person name="Xie M.-H."/>
            <person name="Yansura D.G."/>
            <person name="Yi S."/>
            <person name="Yu G."/>
            <person name="Yuan J."/>
            <person name="Zhang M."/>
            <person name="Zhang Z."/>
            <person name="Goddard A.D."/>
            <person name="Wood W.I."/>
            <person name="Godowski P.J."/>
            <person name="Gray A.M."/>
        </authorList>
    </citation>
    <scope>NUCLEOTIDE SEQUENCE [LARGE SCALE MRNA]</scope>
</reference>
<reference key="2">
    <citation type="journal article" date="2004" name="Nat. Genet.">
        <title>Complete sequencing and characterization of 21,243 full-length human cDNAs.</title>
        <authorList>
            <person name="Ota T."/>
            <person name="Suzuki Y."/>
            <person name="Nishikawa T."/>
            <person name="Otsuki T."/>
            <person name="Sugiyama T."/>
            <person name="Irie R."/>
            <person name="Wakamatsu A."/>
            <person name="Hayashi K."/>
            <person name="Sato H."/>
            <person name="Nagai K."/>
            <person name="Kimura K."/>
            <person name="Makita H."/>
            <person name="Sekine M."/>
            <person name="Obayashi M."/>
            <person name="Nishi T."/>
            <person name="Shibahara T."/>
            <person name="Tanaka T."/>
            <person name="Ishii S."/>
            <person name="Yamamoto J."/>
            <person name="Saito K."/>
            <person name="Kawai Y."/>
            <person name="Isono Y."/>
            <person name="Nakamura Y."/>
            <person name="Nagahari K."/>
            <person name="Murakami K."/>
            <person name="Yasuda T."/>
            <person name="Iwayanagi T."/>
            <person name="Wagatsuma M."/>
            <person name="Shiratori A."/>
            <person name="Sudo H."/>
            <person name="Hosoiri T."/>
            <person name="Kaku Y."/>
            <person name="Kodaira H."/>
            <person name="Kondo H."/>
            <person name="Sugawara M."/>
            <person name="Takahashi M."/>
            <person name="Kanda K."/>
            <person name="Yokoi T."/>
            <person name="Furuya T."/>
            <person name="Kikkawa E."/>
            <person name="Omura Y."/>
            <person name="Abe K."/>
            <person name="Kamihara K."/>
            <person name="Katsuta N."/>
            <person name="Sato K."/>
            <person name="Tanikawa M."/>
            <person name="Yamazaki M."/>
            <person name="Ninomiya K."/>
            <person name="Ishibashi T."/>
            <person name="Yamashita H."/>
            <person name="Murakawa K."/>
            <person name="Fujimori K."/>
            <person name="Tanai H."/>
            <person name="Kimata M."/>
            <person name="Watanabe M."/>
            <person name="Hiraoka S."/>
            <person name="Chiba Y."/>
            <person name="Ishida S."/>
            <person name="Ono Y."/>
            <person name="Takiguchi S."/>
            <person name="Watanabe S."/>
            <person name="Yosida M."/>
            <person name="Hotuta T."/>
            <person name="Kusano J."/>
            <person name="Kanehori K."/>
            <person name="Takahashi-Fujii A."/>
            <person name="Hara H."/>
            <person name="Tanase T.-O."/>
            <person name="Nomura Y."/>
            <person name="Togiya S."/>
            <person name="Komai F."/>
            <person name="Hara R."/>
            <person name="Takeuchi K."/>
            <person name="Arita M."/>
            <person name="Imose N."/>
            <person name="Musashino K."/>
            <person name="Yuuki H."/>
            <person name="Oshima A."/>
            <person name="Sasaki N."/>
            <person name="Aotsuka S."/>
            <person name="Yoshikawa Y."/>
            <person name="Matsunawa H."/>
            <person name="Ichihara T."/>
            <person name="Shiohata N."/>
            <person name="Sano S."/>
            <person name="Moriya S."/>
            <person name="Momiyama H."/>
            <person name="Satoh N."/>
            <person name="Takami S."/>
            <person name="Terashima Y."/>
            <person name="Suzuki O."/>
            <person name="Nakagawa S."/>
            <person name="Senoh A."/>
            <person name="Mizoguchi H."/>
            <person name="Goto Y."/>
            <person name="Shimizu F."/>
            <person name="Wakebe H."/>
            <person name="Hishigaki H."/>
            <person name="Watanabe T."/>
            <person name="Sugiyama A."/>
            <person name="Takemoto M."/>
            <person name="Kawakami B."/>
            <person name="Yamazaki M."/>
            <person name="Watanabe K."/>
            <person name="Kumagai A."/>
            <person name="Itakura S."/>
            <person name="Fukuzumi Y."/>
            <person name="Fujimori Y."/>
            <person name="Komiyama M."/>
            <person name="Tashiro H."/>
            <person name="Tanigami A."/>
            <person name="Fujiwara T."/>
            <person name="Ono T."/>
            <person name="Yamada K."/>
            <person name="Fujii Y."/>
            <person name="Ozaki K."/>
            <person name="Hirao M."/>
            <person name="Ohmori Y."/>
            <person name="Kawabata A."/>
            <person name="Hikiji T."/>
            <person name="Kobatake N."/>
            <person name="Inagaki H."/>
            <person name="Ikema Y."/>
            <person name="Okamoto S."/>
            <person name="Okitani R."/>
            <person name="Kawakami T."/>
            <person name="Noguchi S."/>
            <person name="Itoh T."/>
            <person name="Shigeta K."/>
            <person name="Senba T."/>
            <person name="Matsumura K."/>
            <person name="Nakajima Y."/>
            <person name="Mizuno T."/>
            <person name="Morinaga M."/>
            <person name="Sasaki M."/>
            <person name="Togashi T."/>
            <person name="Oyama M."/>
            <person name="Hata H."/>
            <person name="Watanabe M."/>
            <person name="Komatsu T."/>
            <person name="Mizushima-Sugano J."/>
            <person name="Satoh T."/>
            <person name="Shirai Y."/>
            <person name="Takahashi Y."/>
            <person name="Nakagawa K."/>
            <person name="Okumura K."/>
            <person name="Nagase T."/>
            <person name="Nomura N."/>
            <person name="Kikuchi H."/>
            <person name="Masuho Y."/>
            <person name="Yamashita R."/>
            <person name="Nakai K."/>
            <person name="Yada T."/>
            <person name="Nakamura Y."/>
            <person name="Ohara O."/>
            <person name="Isogai T."/>
            <person name="Sugano S."/>
        </authorList>
    </citation>
    <scope>NUCLEOTIDE SEQUENCE [LARGE SCALE MRNA]</scope>
    <source>
        <tissue>Small intestine</tissue>
    </source>
</reference>
<reference key="3">
    <citation type="submission" date="2005-07" db="EMBL/GenBank/DDBJ databases">
        <authorList>
            <person name="Mural R.J."/>
            <person name="Istrail S."/>
            <person name="Sutton G.G."/>
            <person name="Florea L."/>
            <person name="Halpern A.L."/>
            <person name="Mobarry C.M."/>
            <person name="Lippert R."/>
            <person name="Walenz B."/>
            <person name="Shatkay H."/>
            <person name="Dew I."/>
            <person name="Miller J.R."/>
            <person name="Flanigan M.J."/>
            <person name="Edwards N.J."/>
            <person name="Bolanos R."/>
            <person name="Fasulo D."/>
            <person name="Halldorsson B.V."/>
            <person name="Hannenhalli S."/>
            <person name="Turner R."/>
            <person name="Yooseph S."/>
            <person name="Lu F."/>
            <person name="Nusskern D.R."/>
            <person name="Shue B.C."/>
            <person name="Zheng X.H."/>
            <person name="Zhong F."/>
            <person name="Delcher A.L."/>
            <person name="Huson D.H."/>
            <person name="Kravitz S.A."/>
            <person name="Mouchard L."/>
            <person name="Reinert K."/>
            <person name="Remington K.A."/>
            <person name="Clark A.G."/>
            <person name="Waterman M.S."/>
            <person name="Eichler E.E."/>
            <person name="Adams M.D."/>
            <person name="Hunkapiller M.W."/>
            <person name="Myers E.W."/>
            <person name="Venter J.C."/>
        </authorList>
    </citation>
    <scope>NUCLEOTIDE SEQUENCE [LARGE SCALE GENOMIC DNA]</scope>
</reference>
<reference key="4">
    <citation type="journal article" date="2004" name="Genome Res.">
        <title>The status, quality, and expansion of the NIH full-length cDNA project: the Mammalian Gene Collection (MGC).</title>
        <authorList>
            <consortium name="The MGC Project Team"/>
        </authorList>
    </citation>
    <scope>NUCLEOTIDE SEQUENCE [LARGE SCALE MRNA]</scope>
    <source>
        <tissue>Pancreas</tissue>
        <tissue>Placenta</tissue>
    </source>
</reference>
<reference key="5">
    <citation type="journal article" date="2010" name="J. Cell. Physiol.">
        <title>Elevated expression of TMEM205, a hypothetical membrane protein, is associated with cisplatin resistance.</title>
        <authorList>
            <person name="Shen D.W."/>
            <person name="Ma J."/>
            <person name="Okabe M."/>
            <person name="Zhang G."/>
            <person name="Xia D."/>
            <person name="Gottesman M.M."/>
        </authorList>
    </citation>
    <scope>FUNCTION</scope>
    <scope>SUBCELLULAR LOCATION</scope>
    <scope>TISSUE SPECIFICITY</scope>
</reference>
<reference key="6">
    <citation type="journal article" date="2011" name="BMC Syst. Biol.">
        <title>Initial characterization of the human central proteome.</title>
        <authorList>
            <person name="Burkard T.R."/>
            <person name="Planyavsky M."/>
            <person name="Kaupe I."/>
            <person name="Breitwieser F.P."/>
            <person name="Buerckstuemmer T."/>
            <person name="Bennett K.L."/>
            <person name="Superti-Furga G."/>
            <person name="Colinge J."/>
        </authorList>
    </citation>
    <scope>IDENTIFICATION BY MASS SPECTROMETRY [LARGE SCALE ANALYSIS]</scope>
</reference>
<reference key="7">
    <citation type="journal article" date="2014" name="J. Proteomics">
        <title>An enzyme assisted RP-RPLC approach for in-depth analysis of human liver phosphoproteome.</title>
        <authorList>
            <person name="Bian Y."/>
            <person name="Song C."/>
            <person name="Cheng K."/>
            <person name="Dong M."/>
            <person name="Wang F."/>
            <person name="Huang J."/>
            <person name="Sun D."/>
            <person name="Wang L."/>
            <person name="Ye M."/>
            <person name="Zou H."/>
        </authorList>
    </citation>
    <scope>IDENTIFICATION BY MASS SPECTROMETRY [LARGE SCALE ANALYSIS]</scope>
    <source>
        <tissue>Liver</tissue>
    </source>
</reference>
<reference key="8">
    <citation type="journal article" date="2015" name="Proteomics">
        <title>N-terminome analysis of the human mitochondrial proteome.</title>
        <authorList>
            <person name="Vaca Jacome A.S."/>
            <person name="Rabilloud T."/>
            <person name="Schaeffer-Reiss C."/>
            <person name="Rompais M."/>
            <person name="Ayoub D."/>
            <person name="Lane L."/>
            <person name="Bairoch A."/>
            <person name="Van Dorsselaer A."/>
            <person name="Carapito C."/>
        </authorList>
    </citation>
    <scope>IDENTIFICATION BY MASS SPECTROMETRY [LARGE SCALE ANALYSIS]</scope>
</reference>
<dbReference type="EMBL" id="AY358949">
    <property type="protein sequence ID" value="AAQ89308.1"/>
    <property type="molecule type" value="mRNA"/>
</dbReference>
<dbReference type="EMBL" id="AK291979">
    <property type="protein sequence ID" value="BAF84668.1"/>
    <property type="molecule type" value="mRNA"/>
</dbReference>
<dbReference type="EMBL" id="CH471106">
    <property type="protein sequence ID" value="EAW84191.1"/>
    <property type="molecule type" value="Genomic_DNA"/>
</dbReference>
<dbReference type="EMBL" id="BC064948">
    <property type="protein sequence ID" value="AAH64948.1"/>
    <property type="molecule type" value="mRNA"/>
</dbReference>
<dbReference type="EMBL" id="BC091472">
    <property type="protein sequence ID" value="AAH91472.1"/>
    <property type="molecule type" value="mRNA"/>
</dbReference>
<dbReference type="CCDS" id="CCDS32909.1"/>
<dbReference type="RefSeq" id="NP_001138888.1">
    <property type="nucleotide sequence ID" value="NM_001145416.2"/>
</dbReference>
<dbReference type="RefSeq" id="NP_001308041.1">
    <property type="nucleotide sequence ID" value="NM_001321112.2"/>
</dbReference>
<dbReference type="RefSeq" id="NP_001308042.1">
    <property type="nucleotide sequence ID" value="NM_001321113.2"/>
</dbReference>
<dbReference type="RefSeq" id="NP_001308043.1">
    <property type="nucleotide sequence ID" value="NM_001321114.2"/>
</dbReference>
<dbReference type="RefSeq" id="NP_212133.1">
    <property type="nucleotide sequence ID" value="NM_033408.4"/>
</dbReference>
<dbReference type="RefSeq" id="NP_940938.1">
    <property type="nucleotide sequence ID" value="NM_198536.3"/>
</dbReference>
<dbReference type="RefSeq" id="XP_005259956.1">
    <property type="nucleotide sequence ID" value="XM_005259899.3"/>
</dbReference>
<dbReference type="RefSeq" id="XP_024307268.1">
    <property type="nucleotide sequence ID" value="XM_024451500.2"/>
</dbReference>
<dbReference type="RefSeq" id="XP_024307269.1">
    <property type="nucleotide sequence ID" value="XM_024451501.2"/>
</dbReference>
<dbReference type="RefSeq" id="XP_054176889.1">
    <property type="nucleotide sequence ID" value="XM_054320914.1"/>
</dbReference>
<dbReference type="RefSeq" id="XP_054176890.1">
    <property type="nucleotide sequence ID" value="XM_054320915.1"/>
</dbReference>
<dbReference type="BioGRID" id="131930">
    <property type="interactions" value="79"/>
</dbReference>
<dbReference type="FunCoup" id="Q6UW68">
    <property type="interactions" value="153"/>
</dbReference>
<dbReference type="IntAct" id="Q6UW68">
    <property type="interactions" value="42"/>
</dbReference>
<dbReference type="MINT" id="Q6UW68"/>
<dbReference type="STRING" id="9606.ENSP00000346954"/>
<dbReference type="TCDB" id="9.A.55.1.1">
    <property type="family name" value="the tmem205 (tmem205) family"/>
</dbReference>
<dbReference type="iPTMnet" id="Q6UW68"/>
<dbReference type="PhosphoSitePlus" id="Q6UW68"/>
<dbReference type="SwissPalm" id="Q6UW68"/>
<dbReference type="BioMuta" id="TMEM205"/>
<dbReference type="DMDM" id="74749383"/>
<dbReference type="jPOST" id="Q6UW68"/>
<dbReference type="MassIVE" id="Q6UW68"/>
<dbReference type="PaxDb" id="9606-ENSP00000346954"/>
<dbReference type="PeptideAtlas" id="Q6UW68"/>
<dbReference type="ProteomicsDB" id="67453"/>
<dbReference type="Pumba" id="Q6UW68"/>
<dbReference type="TopDownProteomics" id="Q6UW68"/>
<dbReference type="Antibodypedia" id="52091">
    <property type="antibodies" value="108 antibodies from 23 providers"/>
</dbReference>
<dbReference type="DNASU" id="374882"/>
<dbReference type="Ensembl" id="ENST00000354882.10">
    <property type="protein sequence ID" value="ENSP00000346954.4"/>
    <property type="gene ID" value="ENSG00000105518.14"/>
</dbReference>
<dbReference type="Ensembl" id="ENST00000447337.5">
    <property type="protein sequence ID" value="ENSP00000398258.1"/>
    <property type="gene ID" value="ENSG00000105518.14"/>
</dbReference>
<dbReference type="Ensembl" id="ENST00000586590.5">
    <property type="protein sequence ID" value="ENSP00000466986.1"/>
    <property type="gene ID" value="ENSG00000105518.14"/>
</dbReference>
<dbReference type="Ensembl" id="ENST00000586956.5">
    <property type="protein sequence ID" value="ENSP00000465483.1"/>
    <property type="gene ID" value="ENSG00000105518.14"/>
</dbReference>
<dbReference type="Ensembl" id="ENST00000587948.5">
    <property type="protein sequence ID" value="ENSP00000465149.1"/>
    <property type="gene ID" value="ENSG00000105518.14"/>
</dbReference>
<dbReference type="Ensembl" id="ENST00000588560.5">
    <property type="protein sequence ID" value="ENSP00000466495.1"/>
    <property type="gene ID" value="ENSG00000105518.14"/>
</dbReference>
<dbReference type="Ensembl" id="ENST00000589555.5">
    <property type="protein sequence ID" value="ENSP00000465553.1"/>
    <property type="gene ID" value="ENSG00000105518.14"/>
</dbReference>
<dbReference type="Ensembl" id="ENST00000593256.6">
    <property type="protein sequence ID" value="ENSP00000468733.1"/>
    <property type="gene ID" value="ENSG00000105518.14"/>
</dbReference>
<dbReference type="GeneID" id="374882"/>
<dbReference type="KEGG" id="hsa:374882"/>
<dbReference type="MANE-Select" id="ENST00000354882.10">
    <property type="protein sequence ID" value="ENSP00000346954.4"/>
    <property type="RefSeq nucleotide sequence ID" value="NM_198536.3"/>
    <property type="RefSeq protein sequence ID" value="NP_940938.1"/>
</dbReference>
<dbReference type="UCSC" id="uc002mqz.3">
    <property type="organism name" value="human"/>
</dbReference>
<dbReference type="AGR" id="HGNC:29631"/>
<dbReference type="CTD" id="374882"/>
<dbReference type="DisGeNET" id="374882"/>
<dbReference type="GeneCards" id="TMEM205"/>
<dbReference type="HGNC" id="HGNC:29631">
    <property type="gene designation" value="TMEM205"/>
</dbReference>
<dbReference type="HPA" id="ENSG00000105518">
    <property type="expression patterns" value="Low tissue specificity"/>
</dbReference>
<dbReference type="MIM" id="613771">
    <property type="type" value="gene"/>
</dbReference>
<dbReference type="neXtProt" id="NX_Q6UW68"/>
<dbReference type="OpenTargets" id="ENSG00000105518"/>
<dbReference type="PharmGKB" id="PA162406385"/>
<dbReference type="VEuPathDB" id="HostDB:ENSG00000105518"/>
<dbReference type="eggNOG" id="KOG2886">
    <property type="taxonomic scope" value="Eukaryota"/>
</dbReference>
<dbReference type="GeneTree" id="ENSGT00390000016298"/>
<dbReference type="InParanoid" id="Q6UW68"/>
<dbReference type="OMA" id="FQMRAVE"/>
<dbReference type="OrthoDB" id="1641132at2759"/>
<dbReference type="PAN-GO" id="Q6UW68">
    <property type="GO annotations" value="0 GO annotations based on evolutionary models"/>
</dbReference>
<dbReference type="PhylomeDB" id="Q6UW68"/>
<dbReference type="TreeFam" id="TF323838"/>
<dbReference type="PathwayCommons" id="Q6UW68"/>
<dbReference type="SignaLink" id="Q6UW68"/>
<dbReference type="BioGRID-ORCS" id="374882">
    <property type="hits" value="13 hits in 1157 CRISPR screens"/>
</dbReference>
<dbReference type="ChiTaRS" id="TMEM205">
    <property type="organism name" value="human"/>
</dbReference>
<dbReference type="GenomeRNAi" id="374882"/>
<dbReference type="Pharos" id="Q6UW68">
    <property type="development level" value="Tdark"/>
</dbReference>
<dbReference type="PRO" id="PR:Q6UW68"/>
<dbReference type="Proteomes" id="UP000005640">
    <property type="component" value="Chromosome 19"/>
</dbReference>
<dbReference type="RNAct" id="Q6UW68">
    <property type="molecule type" value="protein"/>
</dbReference>
<dbReference type="Bgee" id="ENSG00000105518">
    <property type="expression patterns" value="Expressed in left adrenal gland cortex and 178 other cell types or tissues"/>
</dbReference>
<dbReference type="ExpressionAtlas" id="Q6UW68">
    <property type="expression patterns" value="baseline and differential"/>
</dbReference>
<dbReference type="GO" id="GO:0016020">
    <property type="term" value="C:membrane"/>
    <property type="evidence" value="ECO:0007669"/>
    <property type="project" value="UniProtKB-SubCell"/>
</dbReference>
<dbReference type="InterPro" id="IPR042623">
    <property type="entry name" value="TMEM205"/>
</dbReference>
<dbReference type="InterPro" id="IPR025423">
    <property type="entry name" value="TMEM205-like"/>
</dbReference>
<dbReference type="PANTHER" id="PTHR46916">
    <property type="entry name" value="TRANSMEMBRANE PROTEIN 205"/>
    <property type="match status" value="1"/>
</dbReference>
<dbReference type="PANTHER" id="PTHR46916:SF2">
    <property type="entry name" value="TRANSMEMBRANE PROTEIN 205"/>
    <property type="match status" value="1"/>
</dbReference>
<dbReference type="Pfam" id="PF13664">
    <property type="entry name" value="DUF4149"/>
    <property type="match status" value="1"/>
</dbReference>
<feature type="chain" id="PRO_0000317501" description="Transmembrane protein 205">
    <location>
        <begin position="1"/>
        <end position="189"/>
    </location>
</feature>
<feature type="transmembrane region" description="Helical" evidence="1">
    <location>
        <begin position="18"/>
        <end position="38"/>
    </location>
</feature>
<feature type="transmembrane region" description="Helical" evidence="1">
    <location>
        <begin position="53"/>
        <end position="73"/>
    </location>
</feature>
<feature type="transmembrane region" description="Helical" evidence="1">
    <location>
        <begin position="81"/>
        <end position="101"/>
    </location>
</feature>
<feature type="transmembrane region" description="Helical" evidence="1">
    <location>
        <begin position="166"/>
        <end position="186"/>
    </location>
</feature>
<gene>
    <name type="primary">TMEM205</name>
    <name type="ORF">UNQ501/PRO1018</name>
</gene>